<reference key="1">
    <citation type="journal article" date="1994" name="Mol. Gen. Genet.">
        <title>A putative catabolite-repressed cell wall protein from the mycoparasitic fungus Trichoderma harzianum.</title>
        <authorList>
            <person name="Lora J.M."/>
            <person name="de la Cruz J."/>
            <person name="Benitez T."/>
            <person name="Llobell A."/>
            <person name="Pintor-Toro J.A."/>
        </authorList>
    </citation>
    <scope>NUCLEOTIDE SEQUENCE [MRNA]</scope>
    <scope>INDUCTION</scope>
    <scope>FUNCTION</scope>
    <scope>SUBCELLULAR LOCATION</scope>
    <source>
        <strain>ATCC 48131 / CBS 354.33 / CECT 2413 / VTT D-80150</strain>
    </source>
</reference>
<protein>
    <recommendedName>
        <fullName evidence="5">Class II hydrophobin qid3</fullName>
    </recommendedName>
</protein>
<proteinExistence type="evidence at transcript level"/>
<sequence length="143" mass="14020">MKFLTVAAVFFTAVLAAPGNYPPPPPPTYAPPPPTYTLPPNGNGGGNGNGNGNGNGGGNGNGNGNTNTGGSALCPAGLYSNPQSCATDVLGLADLDCAVPSTTPHDGPNFQSICVANGGKRARCCVLPVLGLGVLCQNPVGTN</sequence>
<dbReference type="EMBL" id="X71913">
    <property type="protein sequence ID" value="CAA50728.1"/>
    <property type="molecule type" value="mRNA"/>
</dbReference>
<dbReference type="PIR" id="S42579">
    <property type="entry name" value="S42579"/>
</dbReference>
<dbReference type="SMR" id="P52755"/>
<dbReference type="GO" id="GO:0005576">
    <property type="term" value="C:extracellular region"/>
    <property type="evidence" value="ECO:0007669"/>
    <property type="project" value="UniProtKB-KW"/>
</dbReference>
<dbReference type="CDD" id="cd23508">
    <property type="entry name" value="hydrophobin_II"/>
    <property type="match status" value="1"/>
</dbReference>
<dbReference type="Gene3D" id="3.20.120.10">
    <property type="entry name" value="Hydrophobin"/>
    <property type="match status" value="1"/>
</dbReference>
<dbReference type="InterPro" id="IPR010636">
    <property type="entry name" value="Cerato-ulmin_hydrophobin"/>
</dbReference>
<dbReference type="InterPro" id="IPR036686">
    <property type="entry name" value="Hydrophobin_sf"/>
</dbReference>
<dbReference type="PANTHER" id="PTHR42341">
    <property type="entry name" value="HYDROPHOBIN"/>
    <property type="match status" value="1"/>
</dbReference>
<dbReference type="PANTHER" id="PTHR42341:SF1">
    <property type="entry name" value="HYDROPHOBIN"/>
    <property type="match status" value="1"/>
</dbReference>
<dbReference type="Pfam" id="PF06766">
    <property type="entry name" value="Hydrophobin_2"/>
    <property type="match status" value="1"/>
</dbReference>
<dbReference type="SUPFAM" id="SSF101751">
    <property type="entry name" value="Hydrophobin II, HfbII"/>
    <property type="match status" value="1"/>
</dbReference>
<gene>
    <name evidence="5" type="primary">qid3</name>
</gene>
<keyword id="KW-0134">Cell wall</keyword>
<keyword id="KW-1015">Disulfide bond</keyword>
<keyword id="KW-0677">Repeat</keyword>
<keyword id="KW-0964">Secreted</keyword>
<keyword id="KW-0732">Signal</keyword>
<keyword id="KW-0346">Stress response</keyword>
<organism>
    <name type="scientific">Trichoderma harzianum</name>
    <name type="common">Hypocrea lixii</name>
    <dbReference type="NCBI Taxonomy" id="5544"/>
    <lineage>
        <taxon>Eukaryota</taxon>
        <taxon>Fungi</taxon>
        <taxon>Dikarya</taxon>
        <taxon>Ascomycota</taxon>
        <taxon>Pezizomycotina</taxon>
        <taxon>Sordariomycetes</taxon>
        <taxon>Hypocreomycetidae</taxon>
        <taxon>Hypocreales</taxon>
        <taxon>Hypocreaceae</taxon>
        <taxon>Trichoderma</taxon>
    </lineage>
</organism>
<name>QID3_TRIHA</name>
<evidence type="ECO:0000250" key="1">
    <source>
        <dbReference type="UniProtKB" id="P52754"/>
    </source>
</evidence>
<evidence type="ECO:0000255" key="2"/>
<evidence type="ECO:0000256" key="3">
    <source>
        <dbReference type="SAM" id="MobiDB-lite"/>
    </source>
</evidence>
<evidence type="ECO:0000269" key="4">
    <source>
    </source>
</evidence>
<evidence type="ECO:0000303" key="5">
    <source>
    </source>
</evidence>
<evidence type="ECO:0000305" key="6"/>
<evidence type="ECO:0000305" key="7">
    <source>
    </source>
</evidence>
<accession>P52755</accession>
<comment type="function">
    <text evidence="4 6">Aerial growth, conidiation, and dispersal of filamentous fungi in the environment rely upon a capability of their secreting small amphipathic proteins called hydrophobins (HPBs) with low sequence identity. Class I can self-assemble into an outermost layer of rodlet bundles on aerial cell surfaces, conferring cellular hydrophobicity that supports fungal growth, development and dispersal; whereas Class II form highly ordered films at water-air interfaces through intermolecular interactions but contribute nothing to the rodlet structure (Probable). Qid3 is a class II hydrophobin that might acts as a chitinase inhibitor at the cell surface that blocks the degradation of the chitin rings localized in the budding region of dividing cells (PubMed:8121402).</text>
</comment>
<comment type="subunit">
    <text evidence="1">Homotetramer (By similarity). Further self-assembles to form highly ordered films at water-air interfaces through intermolecular interactions (By similarity).</text>
</comment>
<comment type="subcellular location">
    <subcellularLocation>
        <location evidence="7">Secreted</location>
        <location evidence="7">Cell wall</location>
    </subcellularLocation>
    <subcellularLocation>
        <location evidence="7">Secreted</location>
    </subcellularLocation>
</comment>
<comment type="induction">
    <text evidence="4">Expression is induced by carbon starvation.</text>
</comment>
<comment type="similarity">
    <text evidence="6">Belongs to the cerato-ulmin hydrophobin family.</text>
</comment>
<feature type="signal peptide" evidence="2">
    <location>
        <begin position="1"/>
        <end position="17"/>
    </location>
</feature>
<feature type="chain" id="PRO_0000013522" description="Class II hydrophobin qid3">
    <location>
        <begin position="18"/>
        <end position="143"/>
    </location>
</feature>
<feature type="repeat" description="1" evidence="2">
    <location>
        <begin position="41"/>
        <end position="42"/>
    </location>
</feature>
<feature type="repeat" description="2" evidence="2">
    <location>
        <begin position="43"/>
        <end position="44"/>
    </location>
</feature>
<feature type="repeat" description="3" evidence="2">
    <location>
        <begin position="47"/>
        <end position="48"/>
    </location>
</feature>
<feature type="repeat" description="4" evidence="2">
    <location>
        <begin position="49"/>
        <end position="50"/>
    </location>
</feature>
<feature type="repeat" description="5" evidence="2">
    <location>
        <begin position="51"/>
        <end position="52"/>
    </location>
</feature>
<feature type="repeat" description="6" evidence="2">
    <location>
        <begin position="53"/>
        <end position="54"/>
    </location>
</feature>
<feature type="repeat" description="7" evidence="2">
    <location>
        <begin position="55"/>
        <end position="56"/>
    </location>
</feature>
<feature type="repeat" description="8" evidence="2">
    <location>
        <begin position="59"/>
        <end position="60"/>
    </location>
</feature>
<feature type="repeat" description="9" evidence="2">
    <location>
        <begin position="61"/>
        <end position="62"/>
    </location>
</feature>
<feature type="repeat" description="10" evidence="2">
    <location>
        <begin position="63"/>
        <end position="64"/>
    </location>
</feature>
<feature type="region of interest" description="Disordered" evidence="3">
    <location>
        <begin position="20"/>
        <end position="67"/>
    </location>
</feature>
<feature type="region of interest" description="10 X 2 AA repeats of N-G" evidence="2">
    <location>
        <begin position="41"/>
        <end position="64"/>
    </location>
</feature>
<feature type="compositionally biased region" description="Pro residues" evidence="3">
    <location>
        <begin position="20"/>
        <end position="37"/>
    </location>
</feature>
<feature type="compositionally biased region" description="Gly residues" evidence="3">
    <location>
        <begin position="42"/>
        <end position="63"/>
    </location>
</feature>
<feature type="disulfide bond" evidence="1">
    <location>
        <begin position="74"/>
        <end position="124"/>
    </location>
</feature>
<feature type="disulfide bond" evidence="1">
    <location>
        <begin position="85"/>
        <end position="97"/>
    </location>
</feature>
<feature type="disulfide bond" evidence="1">
    <location>
        <begin position="125"/>
        <end position="136"/>
    </location>
</feature>